<dbReference type="EMBL" id="AE009439">
    <property type="protein sequence ID" value="AAM02674.1"/>
    <property type="molecule type" value="Genomic_DNA"/>
</dbReference>
<dbReference type="RefSeq" id="WP_011019829.1">
    <property type="nucleotide sequence ID" value="NC_003551.1"/>
</dbReference>
<dbReference type="SMR" id="Q8TVD1"/>
<dbReference type="FunCoup" id="Q8TVD1">
    <property type="interactions" value="144"/>
</dbReference>
<dbReference type="STRING" id="190192.MK1461"/>
<dbReference type="PaxDb" id="190192-MK1461"/>
<dbReference type="EnsemblBacteria" id="AAM02674">
    <property type="protein sequence ID" value="AAM02674"/>
    <property type="gene ID" value="MK1461"/>
</dbReference>
<dbReference type="GeneID" id="1478056"/>
<dbReference type="KEGG" id="mka:MK1461"/>
<dbReference type="PATRIC" id="fig|190192.8.peg.1617"/>
<dbReference type="HOGENOM" id="CLU_062507_1_0_2"/>
<dbReference type="InParanoid" id="Q8TVD1"/>
<dbReference type="OrthoDB" id="30639at2157"/>
<dbReference type="Proteomes" id="UP000001826">
    <property type="component" value="Chromosome"/>
</dbReference>
<dbReference type="GO" id="GO:1990904">
    <property type="term" value="C:ribonucleoprotein complex"/>
    <property type="evidence" value="ECO:0007669"/>
    <property type="project" value="UniProtKB-KW"/>
</dbReference>
<dbReference type="GO" id="GO:0005840">
    <property type="term" value="C:ribosome"/>
    <property type="evidence" value="ECO:0007669"/>
    <property type="project" value="UniProtKB-KW"/>
</dbReference>
<dbReference type="GO" id="GO:0003735">
    <property type="term" value="F:structural constituent of ribosome"/>
    <property type="evidence" value="ECO:0007669"/>
    <property type="project" value="InterPro"/>
</dbReference>
<dbReference type="GO" id="GO:0006412">
    <property type="term" value="P:translation"/>
    <property type="evidence" value="ECO:0007669"/>
    <property type="project" value="UniProtKB-UniRule"/>
</dbReference>
<dbReference type="HAMAP" id="MF_00359">
    <property type="entry name" value="Ribosomal_eS1"/>
    <property type="match status" value="1"/>
</dbReference>
<dbReference type="InterPro" id="IPR001593">
    <property type="entry name" value="Ribosomal_eS1"/>
</dbReference>
<dbReference type="InterPro" id="IPR030838">
    <property type="entry name" value="Ribosomal_eS1_arc"/>
</dbReference>
<dbReference type="InterPro" id="IPR018281">
    <property type="entry name" value="Ribosomal_eS1_CS"/>
</dbReference>
<dbReference type="NCBIfam" id="NF003142">
    <property type="entry name" value="PRK04057.1"/>
    <property type="match status" value="1"/>
</dbReference>
<dbReference type="PANTHER" id="PTHR11830">
    <property type="entry name" value="40S RIBOSOMAL PROTEIN S3A"/>
    <property type="match status" value="1"/>
</dbReference>
<dbReference type="Pfam" id="PF01015">
    <property type="entry name" value="Ribosomal_S3Ae"/>
    <property type="match status" value="1"/>
</dbReference>
<dbReference type="SMART" id="SM01397">
    <property type="entry name" value="Ribosomal_S3Ae"/>
    <property type="match status" value="1"/>
</dbReference>
<dbReference type="PROSITE" id="PS01191">
    <property type="entry name" value="RIBOSOMAL_S3AE"/>
    <property type="match status" value="1"/>
</dbReference>
<sequence length="211" mass="24376">MVRDKWKDKVWYTILAPDMFDNVEVGETPADDPEKVIGRVLETTLGDVLDDITKHHIKVFFRIYDVEGTTAYSKFEGHRLMRDYVRSLVRRGTSRIDGVIDVVTKDGYKVRVAGLAFTTRRAKTSQQRAIRKEMFKVIEENAKECDFDEFIRRCLSISEEESIPEQIKEAGRKIYPIRQAEIRKTEVLEEPNGLPPYEAVGDRATPELASY</sequence>
<gene>
    <name evidence="1" type="primary">rps3ae</name>
    <name type="ordered locus">MK1461</name>
</gene>
<reference key="1">
    <citation type="journal article" date="2002" name="Proc. Natl. Acad. Sci. U.S.A.">
        <title>The complete genome of hyperthermophile Methanopyrus kandleri AV19 and monophyly of archaeal methanogens.</title>
        <authorList>
            <person name="Slesarev A.I."/>
            <person name="Mezhevaya K.V."/>
            <person name="Makarova K.S."/>
            <person name="Polushin N.N."/>
            <person name="Shcherbinina O.V."/>
            <person name="Shakhova V.V."/>
            <person name="Belova G.I."/>
            <person name="Aravind L."/>
            <person name="Natale D.A."/>
            <person name="Rogozin I.B."/>
            <person name="Tatusov R.L."/>
            <person name="Wolf Y.I."/>
            <person name="Stetter K.O."/>
            <person name="Malykh A.G."/>
            <person name="Koonin E.V."/>
            <person name="Kozyavkin S.A."/>
        </authorList>
    </citation>
    <scope>NUCLEOTIDE SEQUENCE [LARGE SCALE GENOMIC DNA]</scope>
    <source>
        <strain>AV19 / DSM 6324 / JCM 9639 / NBRC 100938</strain>
    </source>
</reference>
<keyword id="KW-1185">Reference proteome</keyword>
<keyword id="KW-0687">Ribonucleoprotein</keyword>
<keyword id="KW-0689">Ribosomal protein</keyword>
<accession>Q8TVD1</accession>
<proteinExistence type="inferred from homology"/>
<organism>
    <name type="scientific">Methanopyrus kandleri (strain AV19 / DSM 6324 / JCM 9639 / NBRC 100938)</name>
    <dbReference type="NCBI Taxonomy" id="190192"/>
    <lineage>
        <taxon>Archaea</taxon>
        <taxon>Methanobacteriati</taxon>
        <taxon>Methanobacteriota</taxon>
        <taxon>Methanomada group</taxon>
        <taxon>Methanopyri</taxon>
        <taxon>Methanopyrales</taxon>
        <taxon>Methanopyraceae</taxon>
        <taxon>Methanopyrus</taxon>
    </lineage>
</organism>
<comment type="similarity">
    <text evidence="1">Belongs to the eukaryotic ribosomal protein eS1 family.</text>
</comment>
<evidence type="ECO:0000255" key="1">
    <source>
        <dbReference type="HAMAP-Rule" id="MF_00359"/>
    </source>
</evidence>
<evidence type="ECO:0000256" key="2">
    <source>
        <dbReference type="SAM" id="MobiDB-lite"/>
    </source>
</evidence>
<evidence type="ECO:0000305" key="3"/>
<name>RS3A_METKA</name>
<feature type="chain" id="PRO_0000153549" description="Small ribosomal subunit protein eS1">
    <location>
        <begin position="1"/>
        <end position="211"/>
    </location>
</feature>
<feature type="region of interest" description="Disordered" evidence="2">
    <location>
        <begin position="192"/>
        <end position="211"/>
    </location>
</feature>
<protein>
    <recommendedName>
        <fullName evidence="1">Small ribosomal subunit protein eS1</fullName>
    </recommendedName>
    <alternativeName>
        <fullName evidence="3">30S ribosomal protein S3Ae</fullName>
    </alternativeName>
    <alternativeName>
        <fullName evidence="1">Ribosomal protein S1e</fullName>
    </alternativeName>
</protein>